<evidence type="ECO:0000255" key="1">
    <source>
        <dbReference type="HAMAP-Rule" id="MF_01416"/>
    </source>
</evidence>
<sequence>MAETSSLISGVAQRYAGSLFEHALDANSVASVEKDLGRFEALLSGSEDLRRLISSPVFSSEDQLHAIGAIADKAGIKGLVGNFLRVVAQNRRLFALPGIIAAFRQIAAEHRGEISADVVSAHELTSAQQNELKATLKGVAGKDVTINVTVDPSILGGLIVKMGSRQIDTSLRTKLSSLKLALKEVG</sequence>
<proteinExistence type="inferred from homology"/>
<reference key="1">
    <citation type="journal article" date="2005" name="J. Bacteriol.">
        <title>Completion of the genome sequence of Brucella abortus and comparison to the highly similar genomes of Brucella melitensis and Brucella suis.</title>
        <authorList>
            <person name="Halling S.M."/>
            <person name="Peterson-Burch B.D."/>
            <person name="Bricker B.J."/>
            <person name="Zuerner R.L."/>
            <person name="Qing Z."/>
            <person name="Li L.-L."/>
            <person name="Kapur V."/>
            <person name="Alt D.P."/>
            <person name="Olsen S.C."/>
        </authorList>
    </citation>
    <scope>NUCLEOTIDE SEQUENCE [LARGE SCALE GENOMIC DNA]</scope>
    <source>
        <strain>9-941</strain>
    </source>
</reference>
<feature type="chain" id="PRO_0000370908" description="ATP synthase subunit delta">
    <location>
        <begin position="1"/>
        <end position="186"/>
    </location>
</feature>
<accession>Q57B85</accession>
<protein>
    <recommendedName>
        <fullName evidence="1">ATP synthase subunit delta</fullName>
    </recommendedName>
    <alternativeName>
        <fullName evidence="1">ATP synthase F(1) sector subunit delta</fullName>
    </alternativeName>
    <alternativeName>
        <fullName evidence="1">F-type ATPase subunit delta</fullName>
        <shortName evidence="1">F-ATPase subunit delta</shortName>
    </alternativeName>
</protein>
<keyword id="KW-0066">ATP synthesis</keyword>
<keyword id="KW-0997">Cell inner membrane</keyword>
<keyword id="KW-1003">Cell membrane</keyword>
<keyword id="KW-0139">CF(1)</keyword>
<keyword id="KW-0375">Hydrogen ion transport</keyword>
<keyword id="KW-0406">Ion transport</keyword>
<keyword id="KW-0472">Membrane</keyword>
<keyword id="KW-0813">Transport</keyword>
<name>ATPD_BRUAB</name>
<organism>
    <name type="scientific">Brucella abortus biovar 1 (strain 9-941)</name>
    <dbReference type="NCBI Taxonomy" id="262698"/>
    <lineage>
        <taxon>Bacteria</taxon>
        <taxon>Pseudomonadati</taxon>
        <taxon>Pseudomonadota</taxon>
        <taxon>Alphaproteobacteria</taxon>
        <taxon>Hyphomicrobiales</taxon>
        <taxon>Brucellaceae</taxon>
        <taxon>Brucella/Ochrobactrum group</taxon>
        <taxon>Brucella</taxon>
    </lineage>
</organism>
<dbReference type="EMBL" id="AE017223">
    <property type="protein sequence ID" value="AAX75099.1"/>
    <property type="molecule type" value="Genomic_DNA"/>
</dbReference>
<dbReference type="RefSeq" id="WP_002964879.1">
    <property type="nucleotide sequence ID" value="NC_006932.1"/>
</dbReference>
<dbReference type="SMR" id="Q57B85"/>
<dbReference type="EnsemblBacteria" id="AAX75099">
    <property type="protein sequence ID" value="AAX75099"/>
    <property type="gene ID" value="BruAb1_1782"/>
</dbReference>
<dbReference type="KEGG" id="bmb:BruAb1_1782"/>
<dbReference type="HOGENOM" id="CLU_085114_0_1_5"/>
<dbReference type="Proteomes" id="UP000000540">
    <property type="component" value="Chromosome I"/>
</dbReference>
<dbReference type="GO" id="GO:0005886">
    <property type="term" value="C:plasma membrane"/>
    <property type="evidence" value="ECO:0007669"/>
    <property type="project" value="UniProtKB-SubCell"/>
</dbReference>
<dbReference type="GO" id="GO:0045259">
    <property type="term" value="C:proton-transporting ATP synthase complex"/>
    <property type="evidence" value="ECO:0007669"/>
    <property type="project" value="UniProtKB-KW"/>
</dbReference>
<dbReference type="GO" id="GO:0046933">
    <property type="term" value="F:proton-transporting ATP synthase activity, rotational mechanism"/>
    <property type="evidence" value="ECO:0007669"/>
    <property type="project" value="UniProtKB-UniRule"/>
</dbReference>
<dbReference type="Gene3D" id="1.10.520.20">
    <property type="entry name" value="N-terminal domain of the delta subunit of the F1F0-ATP synthase"/>
    <property type="match status" value="1"/>
</dbReference>
<dbReference type="HAMAP" id="MF_01416">
    <property type="entry name" value="ATP_synth_delta_bact"/>
    <property type="match status" value="1"/>
</dbReference>
<dbReference type="InterPro" id="IPR026015">
    <property type="entry name" value="ATP_synth_OSCP/delta_N_sf"/>
</dbReference>
<dbReference type="InterPro" id="IPR020781">
    <property type="entry name" value="ATPase_OSCP/d_CS"/>
</dbReference>
<dbReference type="InterPro" id="IPR000711">
    <property type="entry name" value="ATPase_OSCP/dsu"/>
</dbReference>
<dbReference type="NCBIfam" id="TIGR01145">
    <property type="entry name" value="ATP_synt_delta"/>
    <property type="match status" value="1"/>
</dbReference>
<dbReference type="NCBIfam" id="NF004402">
    <property type="entry name" value="PRK05758.2-2"/>
    <property type="match status" value="1"/>
</dbReference>
<dbReference type="NCBIfam" id="NF004406">
    <property type="entry name" value="PRK05758.3-2"/>
    <property type="match status" value="1"/>
</dbReference>
<dbReference type="PANTHER" id="PTHR11910">
    <property type="entry name" value="ATP SYNTHASE DELTA CHAIN"/>
    <property type="match status" value="1"/>
</dbReference>
<dbReference type="Pfam" id="PF00213">
    <property type="entry name" value="OSCP"/>
    <property type="match status" value="1"/>
</dbReference>
<dbReference type="PRINTS" id="PR00125">
    <property type="entry name" value="ATPASEDELTA"/>
</dbReference>
<dbReference type="SUPFAM" id="SSF47928">
    <property type="entry name" value="N-terminal domain of the delta subunit of the F1F0-ATP synthase"/>
    <property type="match status" value="1"/>
</dbReference>
<dbReference type="PROSITE" id="PS00389">
    <property type="entry name" value="ATPASE_DELTA"/>
    <property type="match status" value="1"/>
</dbReference>
<comment type="function">
    <text evidence="1">F(1)F(0) ATP synthase produces ATP from ADP in the presence of a proton or sodium gradient. F-type ATPases consist of two structural domains, F(1) containing the extramembraneous catalytic core and F(0) containing the membrane proton channel, linked together by a central stalk and a peripheral stalk. During catalysis, ATP synthesis in the catalytic domain of F(1) is coupled via a rotary mechanism of the central stalk subunits to proton translocation.</text>
</comment>
<comment type="function">
    <text evidence="1">This protein is part of the stalk that links CF(0) to CF(1). It either transmits conformational changes from CF(0) to CF(1) or is implicated in proton conduction.</text>
</comment>
<comment type="subunit">
    <text evidence="1">F-type ATPases have 2 components, F(1) - the catalytic core - and F(0) - the membrane proton channel. F(1) has five subunits: alpha(3), beta(3), gamma(1), delta(1), epsilon(1). F(0) has three main subunits: a(1), b(2) and c(10-14). The alpha and beta chains form an alternating ring which encloses part of the gamma chain. F(1) is attached to F(0) by a central stalk formed by the gamma and epsilon chains, while a peripheral stalk is formed by the delta and b chains.</text>
</comment>
<comment type="subcellular location">
    <subcellularLocation>
        <location evidence="1">Cell inner membrane</location>
        <topology evidence="1">Peripheral membrane protein</topology>
    </subcellularLocation>
</comment>
<comment type="similarity">
    <text evidence="1">Belongs to the ATPase delta chain family.</text>
</comment>
<gene>
    <name evidence="1" type="primary">atpH</name>
    <name type="ordered locus">BruAb1_1782</name>
</gene>